<dbReference type="EC" id="4.1.2.4" evidence="1"/>
<dbReference type="EMBL" id="AL766855">
    <property type="protein sequence ID" value="CAD47683.1"/>
    <property type="molecule type" value="Genomic_DNA"/>
</dbReference>
<dbReference type="RefSeq" id="WP_000453154.1">
    <property type="nucleotide sequence ID" value="NC_004368.1"/>
</dbReference>
<dbReference type="SMR" id="Q8E2U1"/>
<dbReference type="KEGG" id="san:gbs2024"/>
<dbReference type="eggNOG" id="COG0274">
    <property type="taxonomic scope" value="Bacteria"/>
</dbReference>
<dbReference type="HOGENOM" id="CLU_053595_0_2_9"/>
<dbReference type="UniPathway" id="UPA00002">
    <property type="reaction ID" value="UER00468"/>
</dbReference>
<dbReference type="Proteomes" id="UP000000823">
    <property type="component" value="Chromosome"/>
</dbReference>
<dbReference type="GO" id="GO:0005737">
    <property type="term" value="C:cytoplasm"/>
    <property type="evidence" value="ECO:0007669"/>
    <property type="project" value="UniProtKB-SubCell"/>
</dbReference>
<dbReference type="GO" id="GO:0004139">
    <property type="term" value="F:deoxyribose-phosphate aldolase activity"/>
    <property type="evidence" value="ECO:0007669"/>
    <property type="project" value="UniProtKB-UniRule"/>
</dbReference>
<dbReference type="GO" id="GO:0006018">
    <property type="term" value="P:2-deoxyribose 1-phosphate catabolic process"/>
    <property type="evidence" value="ECO:0007669"/>
    <property type="project" value="UniProtKB-UniRule"/>
</dbReference>
<dbReference type="GO" id="GO:0016052">
    <property type="term" value="P:carbohydrate catabolic process"/>
    <property type="evidence" value="ECO:0007669"/>
    <property type="project" value="TreeGrafter"/>
</dbReference>
<dbReference type="GO" id="GO:0009264">
    <property type="term" value="P:deoxyribonucleotide catabolic process"/>
    <property type="evidence" value="ECO:0007669"/>
    <property type="project" value="InterPro"/>
</dbReference>
<dbReference type="CDD" id="cd00959">
    <property type="entry name" value="DeoC"/>
    <property type="match status" value="1"/>
</dbReference>
<dbReference type="FunFam" id="3.20.20.70:FF:000044">
    <property type="entry name" value="Deoxyribose-phosphate aldolase"/>
    <property type="match status" value="1"/>
</dbReference>
<dbReference type="Gene3D" id="3.20.20.70">
    <property type="entry name" value="Aldolase class I"/>
    <property type="match status" value="1"/>
</dbReference>
<dbReference type="HAMAP" id="MF_00114">
    <property type="entry name" value="DeoC_type1"/>
    <property type="match status" value="1"/>
</dbReference>
<dbReference type="InterPro" id="IPR013785">
    <property type="entry name" value="Aldolase_TIM"/>
</dbReference>
<dbReference type="InterPro" id="IPR011343">
    <property type="entry name" value="DeoC"/>
</dbReference>
<dbReference type="InterPro" id="IPR002915">
    <property type="entry name" value="DeoC/FbaB/LacD_aldolase"/>
</dbReference>
<dbReference type="InterPro" id="IPR028581">
    <property type="entry name" value="DeoC_typeI"/>
</dbReference>
<dbReference type="NCBIfam" id="TIGR00126">
    <property type="entry name" value="deoC"/>
    <property type="match status" value="1"/>
</dbReference>
<dbReference type="PANTHER" id="PTHR10889">
    <property type="entry name" value="DEOXYRIBOSE-PHOSPHATE ALDOLASE"/>
    <property type="match status" value="1"/>
</dbReference>
<dbReference type="PANTHER" id="PTHR10889:SF1">
    <property type="entry name" value="DEOXYRIBOSE-PHOSPHATE ALDOLASE"/>
    <property type="match status" value="1"/>
</dbReference>
<dbReference type="Pfam" id="PF01791">
    <property type="entry name" value="DeoC"/>
    <property type="match status" value="1"/>
</dbReference>
<dbReference type="PIRSF" id="PIRSF001357">
    <property type="entry name" value="DeoC"/>
    <property type="match status" value="1"/>
</dbReference>
<dbReference type="SMART" id="SM01133">
    <property type="entry name" value="DeoC"/>
    <property type="match status" value="1"/>
</dbReference>
<dbReference type="SUPFAM" id="SSF51569">
    <property type="entry name" value="Aldolase"/>
    <property type="match status" value="1"/>
</dbReference>
<organism>
    <name type="scientific">Streptococcus agalactiae serotype III (strain NEM316)</name>
    <dbReference type="NCBI Taxonomy" id="211110"/>
    <lineage>
        <taxon>Bacteria</taxon>
        <taxon>Bacillati</taxon>
        <taxon>Bacillota</taxon>
        <taxon>Bacilli</taxon>
        <taxon>Lactobacillales</taxon>
        <taxon>Streptococcaceae</taxon>
        <taxon>Streptococcus</taxon>
    </lineage>
</organism>
<reference key="1">
    <citation type="journal article" date="2002" name="Mol. Microbiol.">
        <title>Genome sequence of Streptococcus agalactiae, a pathogen causing invasive neonatal disease.</title>
        <authorList>
            <person name="Glaser P."/>
            <person name="Rusniok C."/>
            <person name="Buchrieser C."/>
            <person name="Chevalier F."/>
            <person name="Frangeul L."/>
            <person name="Msadek T."/>
            <person name="Zouine M."/>
            <person name="Couve E."/>
            <person name="Lalioui L."/>
            <person name="Poyart C."/>
            <person name="Trieu-Cuot P."/>
            <person name="Kunst F."/>
        </authorList>
    </citation>
    <scope>NUCLEOTIDE SEQUENCE [LARGE SCALE GENOMIC DNA]</scope>
    <source>
        <strain>NEM316</strain>
    </source>
</reference>
<comment type="function">
    <text evidence="1">Catalyzes a reversible aldol reaction between acetaldehyde and D-glyceraldehyde 3-phosphate to generate 2-deoxy-D-ribose 5-phosphate.</text>
</comment>
<comment type="catalytic activity">
    <reaction evidence="1">
        <text>2-deoxy-D-ribose 5-phosphate = D-glyceraldehyde 3-phosphate + acetaldehyde</text>
        <dbReference type="Rhea" id="RHEA:12821"/>
        <dbReference type="ChEBI" id="CHEBI:15343"/>
        <dbReference type="ChEBI" id="CHEBI:59776"/>
        <dbReference type="ChEBI" id="CHEBI:62877"/>
        <dbReference type="EC" id="4.1.2.4"/>
    </reaction>
</comment>
<comment type="pathway">
    <text evidence="1">Carbohydrate degradation; 2-deoxy-D-ribose 1-phosphate degradation; D-glyceraldehyde 3-phosphate and acetaldehyde from 2-deoxy-alpha-D-ribose 1-phosphate: step 2/2.</text>
</comment>
<comment type="subcellular location">
    <subcellularLocation>
        <location evidence="1">Cytoplasm</location>
    </subcellularLocation>
</comment>
<comment type="similarity">
    <text evidence="1">Belongs to the DeoC/FbaB aldolase family. DeoC type 1 subfamily.</text>
</comment>
<sequence>MEVKDILKTVDHTLLATTATWPEIQTILDDAMAYETASACIPASYVKKAAEYVSGKLAICTVIGFPNGYSTTAAKVFECQDAIKNGADEIDMVINLTDVKNGDFDTVEEEIRQIKAACQDHILKVIVETCQLTKEELIELCGVVTRSGADFIKTSTGFSTAGATFEDVEVMAKYVGEGVKIKAAGGISSLEDAEKFIALGASRLGTSRIIKIVKNQKVEEGTY</sequence>
<gene>
    <name evidence="1" type="primary">deoC</name>
    <name type="ordered locus">gbs2024</name>
</gene>
<evidence type="ECO:0000255" key="1">
    <source>
        <dbReference type="HAMAP-Rule" id="MF_00114"/>
    </source>
</evidence>
<proteinExistence type="inferred from homology"/>
<protein>
    <recommendedName>
        <fullName evidence="1">Deoxyribose-phosphate aldolase</fullName>
        <shortName evidence="1">DERA</shortName>
        <ecNumber evidence="1">4.1.2.4</ecNumber>
    </recommendedName>
    <alternativeName>
        <fullName evidence="1">2-deoxy-D-ribose 5-phosphate aldolase</fullName>
    </alternativeName>
    <alternativeName>
        <fullName evidence="1">Phosphodeoxyriboaldolase</fullName>
        <shortName evidence="1">Deoxyriboaldolase</shortName>
    </alternativeName>
</protein>
<feature type="chain" id="PRO_0000057269" description="Deoxyribose-phosphate aldolase">
    <location>
        <begin position="1"/>
        <end position="223"/>
    </location>
</feature>
<feature type="active site" description="Proton donor/acceptor" evidence="1">
    <location>
        <position position="91"/>
    </location>
</feature>
<feature type="active site" description="Schiff-base intermediate with acetaldehyde" evidence="1">
    <location>
        <position position="153"/>
    </location>
</feature>
<feature type="active site" description="Proton donor/acceptor" evidence="1">
    <location>
        <position position="182"/>
    </location>
</feature>
<keyword id="KW-0963">Cytoplasm</keyword>
<keyword id="KW-0456">Lyase</keyword>
<keyword id="KW-0704">Schiff base</keyword>
<accession>Q8E2U1</accession>
<name>DEOC_STRA3</name>